<feature type="chain" id="PRO_1000138337" description="UPF0434 protein YcaR">
    <location>
        <begin position="1"/>
        <end position="60"/>
    </location>
</feature>
<dbReference type="EMBL" id="CP001063">
    <property type="protein sequence ID" value="ACD06764.1"/>
    <property type="molecule type" value="Genomic_DNA"/>
</dbReference>
<dbReference type="RefSeq" id="WP_000350058.1">
    <property type="nucleotide sequence ID" value="NC_010658.1"/>
</dbReference>
<dbReference type="SMR" id="B2TUG2"/>
<dbReference type="STRING" id="344609.SbBS512_E2407"/>
<dbReference type="GeneID" id="93776498"/>
<dbReference type="KEGG" id="sbc:SbBS512_E2407"/>
<dbReference type="HOGENOM" id="CLU_155659_3_1_6"/>
<dbReference type="Proteomes" id="UP000001030">
    <property type="component" value="Chromosome"/>
</dbReference>
<dbReference type="GO" id="GO:0005829">
    <property type="term" value="C:cytosol"/>
    <property type="evidence" value="ECO:0007669"/>
    <property type="project" value="TreeGrafter"/>
</dbReference>
<dbReference type="FunFam" id="2.20.25.10:FF:000002">
    <property type="entry name" value="UPF0434 protein YcaR"/>
    <property type="match status" value="1"/>
</dbReference>
<dbReference type="Gene3D" id="2.20.25.10">
    <property type="match status" value="1"/>
</dbReference>
<dbReference type="HAMAP" id="MF_01187">
    <property type="entry name" value="UPF0434"/>
    <property type="match status" value="1"/>
</dbReference>
<dbReference type="InterPro" id="IPR005651">
    <property type="entry name" value="Trm112-like"/>
</dbReference>
<dbReference type="NCBIfam" id="NF008806">
    <property type="entry name" value="PRK11827.1"/>
    <property type="match status" value="1"/>
</dbReference>
<dbReference type="PANTHER" id="PTHR33505:SF4">
    <property type="entry name" value="PROTEIN PREY, MITOCHONDRIAL"/>
    <property type="match status" value="1"/>
</dbReference>
<dbReference type="PANTHER" id="PTHR33505">
    <property type="entry name" value="ZGC:162634"/>
    <property type="match status" value="1"/>
</dbReference>
<dbReference type="Pfam" id="PF03966">
    <property type="entry name" value="Trm112p"/>
    <property type="match status" value="1"/>
</dbReference>
<dbReference type="SUPFAM" id="SSF158997">
    <property type="entry name" value="Trm112p-like"/>
    <property type="match status" value="1"/>
</dbReference>
<protein>
    <recommendedName>
        <fullName evidence="1">UPF0434 protein YcaR</fullName>
    </recommendedName>
</protein>
<comment type="similarity">
    <text evidence="1">Belongs to the UPF0434 family.</text>
</comment>
<gene>
    <name evidence="1" type="primary">ycaR</name>
    <name type="ordered locus">SbBS512_E2407</name>
</gene>
<evidence type="ECO:0000255" key="1">
    <source>
        <dbReference type="HAMAP-Rule" id="MF_01187"/>
    </source>
</evidence>
<accession>B2TUG2</accession>
<name>YCAR_SHIB3</name>
<keyword id="KW-1185">Reference proteome</keyword>
<reference key="1">
    <citation type="submission" date="2008-05" db="EMBL/GenBank/DDBJ databases">
        <title>Complete sequence of Shigella boydii serotype 18 strain BS512.</title>
        <authorList>
            <person name="Rasko D.A."/>
            <person name="Rosovitz M."/>
            <person name="Maurelli A.T."/>
            <person name="Myers G."/>
            <person name="Seshadri R."/>
            <person name="Cer R."/>
            <person name="Jiang L."/>
            <person name="Ravel J."/>
            <person name="Sebastian Y."/>
        </authorList>
    </citation>
    <scope>NUCLEOTIDE SEQUENCE [LARGE SCALE GENOMIC DNA]</scope>
    <source>
        <strain>CDC 3083-94 / BS512</strain>
    </source>
</reference>
<organism>
    <name type="scientific">Shigella boydii serotype 18 (strain CDC 3083-94 / BS512)</name>
    <dbReference type="NCBI Taxonomy" id="344609"/>
    <lineage>
        <taxon>Bacteria</taxon>
        <taxon>Pseudomonadati</taxon>
        <taxon>Pseudomonadota</taxon>
        <taxon>Gammaproteobacteria</taxon>
        <taxon>Enterobacterales</taxon>
        <taxon>Enterobacteriaceae</taxon>
        <taxon>Shigella</taxon>
    </lineage>
</organism>
<sequence length="60" mass="6855">MDHRLLEIIACPVCNGKLWYNQEKQELICKLDNLAFPLRDGIPVLLETEARVLTADESKS</sequence>
<proteinExistence type="inferred from homology"/>